<reference key="1">
    <citation type="journal article" date="2009" name="Appl. Environ. Microbiol.">
        <title>Rhizobium sp. strain NGR234 possesses a remarkable number of secretion systems.</title>
        <authorList>
            <person name="Schmeisser C."/>
            <person name="Liesegang H."/>
            <person name="Krysciak D."/>
            <person name="Bakkou N."/>
            <person name="Le Quere A."/>
            <person name="Wollherr A."/>
            <person name="Heinemeyer I."/>
            <person name="Morgenstern B."/>
            <person name="Pommerening-Roeser A."/>
            <person name="Flores M."/>
            <person name="Palacios R."/>
            <person name="Brenner S."/>
            <person name="Gottschalk G."/>
            <person name="Schmitz R.A."/>
            <person name="Broughton W.J."/>
            <person name="Perret X."/>
            <person name="Strittmatter A.W."/>
            <person name="Streit W.R."/>
        </authorList>
    </citation>
    <scope>NUCLEOTIDE SEQUENCE [LARGE SCALE GENOMIC DNA]</scope>
    <source>
        <strain>NBRC 101917 / NGR234</strain>
    </source>
</reference>
<name>MOAC_SINFN</name>
<organism>
    <name type="scientific">Sinorhizobium fredii (strain NBRC 101917 / NGR234)</name>
    <dbReference type="NCBI Taxonomy" id="394"/>
    <lineage>
        <taxon>Bacteria</taxon>
        <taxon>Pseudomonadati</taxon>
        <taxon>Pseudomonadota</taxon>
        <taxon>Alphaproteobacteria</taxon>
        <taxon>Hyphomicrobiales</taxon>
        <taxon>Rhizobiaceae</taxon>
        <taxon>Sinorhizobium/Ensifer group</taxon>
        <taxon>Sinorhizobium</taxon>
    </lineage>
</organism>
<comment type="function">
    <text evidence="1">Catalyzes the conversion of (8S)-3',8-cyclo-7,8-dihydroguanosine 5'-triphosphate to cyclic pyranopterin monophosphate (cPMP).</text>
</comment>
<comment type="catalytic activity">
    <reaction evidence="1">
        <text>(8S)-3',8-cyclo-7,8-dihydroguanosine 5'-triphosphate = cyclic pyranopterin phosphate + diphosphate</text>
        <dbReference type="Rhea" id="RHEA:49580"/>
        <dbReference type="ChEBI" id="CHEBI:33019"/>
        <dbReference type="ChEBI" id="CHEBI:59648"/>
        <dbReference type="ChEBI" id="CHEBI:131766"/>
        <dbReference type="EC" id="4.6.1.17"/>
    </reaction>
</comment>
<comment type="pathway">
    <text evidence="1">Cofactor biosynthesis; molybdopterin biosynthesis.</text>
</comment>
<comment type="subunit">
    <text evidence="1">Homohexamer; trimer of dimers.</text>
</comment>
<comment type="similarity">
    <text evidence="1">Belongs to the MoaC family.</text>
</comment>
<gene>
    <name evidence="1" type="primary">moaC</name>
    <name type="ordered locus">NGR_c14580</name>
</gene>
<dbReference type="EC" id="4.6.1.17" evidence="1"/>
<dbReference type="EMBL" id="CP001389">
    <property type="protein sequence ID" value="ACP25230.1"/>
    <property type="molecule type" value="Genomic_DNA"/>
</dbReference>
<dbReference type="RefSeq" id="YP_002825983.1">
    <property type="nucleotide sequence ID" value="NC_012587.1"/>
</dbReference>
<dbReference type="SMR" id="C3MCF1"/>
<dbReference type="STRING" id="394.NGR_c14580"/>
<dbReference type="KEGG" id="rhi:NGR_c14580"/>
<dbReference type="PATRIC" id="fig|394.7.peg.4271"/>
<dbReference type="eggNOG" id="COG0315">
    <property type="taxonomic scope" value="Bacteria"/>
</dbReference>
<dbReference type="HOGENOM" id="CLU_074693_1_1_5"/>
<dbReference type="OrthoDB" id="9794429at2"/>
<dbReference type="UniPathway" id="UPA00344"/>
<dbReference type="Proteomes" id="UP000001054">
    <property type="component" value="Chromosome"/>
</dbReference>
<dbReference type="GO" id="GO:0061799">
    <property type="term" value="F:cyclic pyranopterin monophosphate synthase activity"/>
    <property type="evidence" value="ECO:0007669"/>
    <property type="project" value="UniProtKB-UniRule"/>
</dbReference>
<dbReference type="GO" id="GO:0006777">
    <property type="term" value="P:Mo-molybdopterin cofactor biosynthetic process"/>
    <property type="evidence" value="ECO:0007669"/>
    <property type="project" value="UniProtKB-UniRule"/>
</dbReference>
<dbReference type="CDD" id="cd01420">
    <property type="entry name" value="MoaC_PE"/>
    <property type="match status" value="1"/>
</dbReference>
<dbReference type="FunFam" id="3.30.70.640:FF:000001">
    <property type="entry name" value="Cyclic pyranopterin monophosphate synthase"/>
    <property type="match status" value="1"/>
</dbReference>
<dbReference type="Gene3D" id="3.30.70.640">
    <property type="entry name" value="Molybdopterin cofactor biosynthesis C (MoaC) domain"/>
    <property type="match status" value="1"/>
</dbReference>
<dbReference type="HAMAP" id="MF_01224_B">
    <property type="entry name" value="MoaC_B"/>
    <property type="match status" value="1"/>
</dbReference>
<dbReference type="InterPro" id="IPR023045">
    <property type="entry name" value="MoaC"/>
</dbReference>
<dbReference type="InterPro" id="IPR047594">
    <property type="entry name" value="MoaC_bact/euk"/>
</dbReference>
<dbReference type="InterPro" id="IPR036522">
    <property type="entry name" value="MoaC_sf"/>
</dbReference>
<dbReference type="InterPro" id="IPR050105">
    <property type="entry name" value="MoCo_biosynth_MoaA/MoaC"/>
</dbReference>
<dbReference type="InterPro" id="IPR002820">
    <property type="entry name" value="Mopterin_CF_biosynth-C_dom"/>
</dbReference>
<dbReference type="NCBIfam" id="TIGR00581">
    <property type="entry name" value="moaC"/>
    <property type="match status" value="1"/>
</dbReference>
<dbReference type="NCBIfam" id="NF006870">
    <property type="entry name" value="PRK09364.1"/>
    <property type="match status" value="1"/>
</dbReference>
<dbReference type="PANTHER" id="PTHR22960">
    <property type="entry name" value="MOLYBDOPTERIN COFACTOR SYNTHESIS PROTEIN A"/>
    <property type="match status" value="1"/>
</dbReference>
<dbReference type="Pfam" id="PF01967">
    <property type="entry name" value="MoaC"/>
    <property type="match status" value="1"/>
</dbReference>
<dbReference type="SUPFAM" id="SSF55040">
    <property type="entry name" value="Molybdenum cofactor biosynthesis protein C, MoaC"/>
    <property type="match status" value="1"/>
</dbReference>
<feature type="chain" id="PRO_1000164898" description="Cyclic pyranopterin monophosphate synthase">
    <location>
        <begin position="1"/>
        <end position="165"/>
    </location>
</feature>
<feature type="active site" evidence="1">
    <location>
        <position position="131"/>
    </location>
</feature>
<feature type="binding site" evidence="1">
    <location>
        <begin position="78"/>
        <end position="80"/>
    </location>
    <ligand>
        <name>substrate</name>
    </ligand>
</feature>
<feature type="binding site" evidence="1">
    <location>
        <begin position="116"/>
        <end position="117"/>
    </location>
    <ligand>
        <name>substrate</name>
    </ligand>
</feature>
<sequence length="165" mass="17448">MMSGPRLTHIDSAGEAHMVDVGDKAETERVAAAEGFVRMRPETLALILEGNAKKGDVIGTARLAGIMAAKQTSNLIPLCHPLMLTKVSVDIVPDDALPGLRIEAMAKLKGRTGVEMEALTAVSIACLTIYDMAKAADREMEIGGIRLVSKSGGKSGDYRRGGDQD</sequence>
<keyword id="KW-0456">Lyase</keyword>
<keyword id="KW-0501">Molybdenum cofactor biosynthesis</keyword>
<keyword id="KW-1185">Reference proteome</keyword>
<protein>
    <recommendedName>
        <fullName evidence="1">Cyclic pyranopterin monophosphate synthase</fullName>
        <ecNumber evidence="1">4.6.1.17</ecNumber>
    </recommendedName>
    <alternativeName>
        <fullName evidence="1">Molybdenum cofactor biosynthesis protein C</fullName>
    </alternativeName>
</protein>
<accession>C3MCF1</accession>
<proteinExistence type="inferred from homology"/>
<evidence type="ECO:0000255" key="1">
    <source>
        <dbReference type="HAMAP-Rule" id="MF_01224"/>
    </source>
</evidence>